<gene>
    <name type="primary">Eif2a</name>
    <name type="synonym">D3Ertd194e</name>
</gene>
<evidence type="ECO:0000250" key="1">
    <source>
        <dbReference type="UniProtKB" id="Q9BY44"/>
    </source>
</evidence>
<evidence type="ECO:0000255" key="2"/>
<evidence type="ECO:0000256" key="3">
    <source>
        <dbReference type="SAM" id="MobiDB-lite"/>
    </source>
</evidence>
<evidence type="ECO:0000303" key="4">
    <source>
    </source>
</evidence>
<evidence type="ECO:0000305" key="5"/>
<name>EIF2A_MOUSE</name>
<comment type="function">
    <text evidence="1">Functions in the early steps of protein synthesis of a small number of specific mRNAs. Acts by directing the binding of methionyl-tRNAi to 40S ribosomal subunits. In contrast to the eIF-2 complex, it binds methionyl-tRNAi to 40S subunits in a codon-dependent manner, whereas the eIF-2 complex binds methionyl-tRNAi to 40S subunits in a GTP-dependent manner.</text>
</comment>
<comment type="alternative products">
    <event type="alternative splicing"/>
    <isoform>
        <id>Q8BJW6-1</id>
        <name>1</name>
        <sequence type="displayed"/>
    </isoform>
    <isoform>
        <id>Q8BJW6-2</id>
        <name>2</name>
        <sequence type="described" ref="VSP_024977 VSP_024978"/>
    </isoform>
</comment>
<comment type="similarity">
    <text evidence="5">Belongs to the WD repeat EIF2A family.</text>
</comment>
<comment type="caution">
    <text evidence="5">This gene should not be confused with EIF2S1, frequently called eIF2-alpha in the literature, and with which it shares the alias EIF2A. EIF2S1 is the alpha subunit of the eIF2 translation initiation complex. Although both of these proteins function in binding initiator tRNA to the 40S ribosomal subunit, the EIF2A protein does so in a codon-dependent manner, whereas eIF2 complex requires GTP.</text>
</comment>
<comment type="sequence caution" evidence="5">
    <conflict type="erroneous initiation">
        <sequence resource="EMBL-CDS" id="BAC37320"/>
    </conflict>
</comment>
<feature type="chain" id="PRO_0000424467" description="Eukaryotic translation initiation factor 2A">
    <location>
        <begin position="1"/>
        <end position="581"/>
    </location>
</feature>
<feature type="initiator methionine" description="Removed; alternate" evidence="1">
    <location>
        <position position="1"/>
    </location>
</feature>
<feature type="chain" id="PRO_0000286077" description="Eukaryotic translation initiation factor 2A, N-terminally processed">
    <location>
        <begin position="2"/>
        <end position="581"/>
    </location>
</feature>
<feature type="repeat" description="WD 1">
    <location>
        <begin position="23"/>
        <end position="63"/>
    </location>
</feature>
<feature type="repeat" description="WD 2">
    <location>
        <begin position="125"/>
        <end position="163"/>
    </location>
</feature>
<feature type="repeat" description="WD 3">
    <location>
        <begin position="356"/>
        <end position="401"/>
    </location>
</feature>
<feature type="region of interest" description="Disordered" evidence="3">
    <location>
        <begin position="432"/>
        <end position="533"/>
    </location>
</feature>
<feature type="coiled-coil region" evidence="2">
    <location>
        <begin position="527"/>
        <end position="578"/>
    </location>
</feature>
<feature type="compositionally biased region" description="Basic and acidic residues" evidence="3">
    <location>
        <begin position="494"/>
        <end position="503"/>
    </location>
</feature>
<feature type="compositionally biased region" description="Polar residues" evidence="3">
    <location>
        <begin position="514"/>
        <end position="524"/>
    </location>
</feature>
<feature type="modified residue" description="N-acetylmethionine" evidence="1">
    <location>
        <position position="1"/>
    </location>
</feature>
<feature type="modified residue" description="N-acetylalanine; in Eukaryotic translation initiation factor 2A, N-terminally processed" evidence="1">
    <location>
        <position position="2"/>
    </location>
</feature>
<feature type="modified residue" description="Phosphothreonine" evidence="1">
    <location>
        <position position="5"/>
    </location>
</feature>
<feature type="modified residue" description="Phosphoserine" evidence="1">
    <location>
        <position position="503"/>
    </location>
</feature>
<feature type="modified residue" description="Phosphoserine" evidence="1">
    <location>
        <position position="513"/>
    </location>
</feature>
<feature type="modified residue" description="Phosphoserine" evidence="1">
    <location>
        <position position="522"/>
    </location>
</feature>
<feature type="splice variant" id="VSP_024977" description="In isoform 2." evidence="4">
    <location>
        <begin position="1"/>
        <end position="94"/>
    </location>
</feature>
<feature type="splice variant" id="VSP_024978" description="In isoform 2." evidence="4">
    <original>PYT</original>
    <variation>MEK</variation>
    <location>
        <begin position="95"/>
        <end position="97"/>
    </location>
</feature>
<organism>
    <name type="scientific">Mus musculus</name>
    <name type="common">Mouse</name>
    <dbReference type="NCBI Taxonomy" id="10090"/>
    <lineage>
        <taxon>Eukaryota</taxon>
        <taxon>Metazoa</taxon>
        <taxon>Chordata</taxon>
        <taxon>Craniata</taxon>
        <taxon>Vertebrata</taxon>
        <taxon>Euteleostomi</taxon>
        <taxon>Mammalia</taxon>
        <taxon>Eutheria</taxon>
        <taxon>Euarchontoglires</taxon>
        <taxon>Glires</taxon>
        <taxon>Rodentia</taxon>
        <taxon>Myomorpha</taxon>
        <taxon>Muroidea</taxon>
        <taxon>Muridae</taxon>
        <taxon>Murinae</taxon>
        <taxon>Mus</taxon>
        <taxon>Mus</taxon>
    </lineage>
</organism>
<protein>
    <recommendedName>
        <fullName>Eukaryotic translation initiation factor 2A</fullName>
        <shortName>eIF-2A</shortName>
    </recommendedName>
    <component>
        <recommendedName>
            <fullName>Eukaryotic translation initiation factor 2A, N-terminally processed</fullName>
        </recommendedName>
    </component>
</protein>
<accession>Q8BJW6</accession>
<accession>Q05C11</accession>
<accession>Q640P8</accession>
<reference key="1">
    <citation type="journal article" date="2005" name="Science">
        <title>The transcriptional landscape of the mammalian genome.</title>
        <authorList>
            <person name="Carninci P."/>
            <person name="Kasukawa T."/>
            <person name="Katayama S."/>
            <person name="Gough J."/>
            <person name="Frith M.C."/>
            <person name="Maeda N."/>
            <person name="Oyama R."/>
            <person name="Ravasi T."/>
            <person name="Lenhard B."/>
            <person name="Wells C."/>
            <person name="Kodzius R."/>
            <person name="Shimokawa K."/>
            <person name="Bajic V.B."/>
            <person name="Brenner S.E."/>
            <person name="Batalov S."/>
            <person name="Forrest A.R."/>
            <person name="Zavolan M."/>
            <person name="Davis M.J."/>
            <person name="Wilming L.G."/>
            <person name="Aidinis V."/>
            <person name="Allen J.E."/>
            <person name="Ambesi-Impiombato A."/>
            <person name="Apweiler R."/>
            <person name="Aturaliya R.N."/>
            <person name="Bailey T.L."/>
            <person name="Bansal M."/>
            <person name="Baxter L."/>
            <person name="Beisel K.W."/>
            <person name="Bersano T."/>
            <person name="Bono H."/>
            <person name="Chalk A.M."/>
            <person name="Chiu K.P."/>
            <person name="Choudhary V."/>
            <person name="Christoffels A."/>
            <person name="Clutterbuck D.R."/>
            <person name="Crowe M.L."/>
            <person name="Dalla E."/>
            <person name="Dalrymple B.P."/>
            <person name="de Bono B."/>
            <person name="Della Gatta G."/>
            <person name="di Bernardo D."/>
            <person name="Down T."/>
            <person name="Engstrom P."/>
            <person name="Fagiolini M."/>
            <person name="Faulkner G."/>
            <person name="Fletcher C.F."/>
            <person name="Fukushima T."/>
            <person name="Furuno M."/>
            <person name="Futaki S."/>
            <person name="Gariboldi M."/>
            <person name="Georgii-Hemming P."/>
            <person name="Gingeras T.R."/>
            <person name="Gojobori T."/>
            <person name="Green R.E."/>
            <person name="Gustincich S."/>
            <person name="Harbers M."/>
            <person name="Hayashi Y."/>
            <person name="Hensch T.K."/>
            <person name="Hirokawa N."/>
            <person name="Hill D."/>
            <person name="Huminiecki L."/>
            <person name="Iacono M."/>
            <person name="Ikeo K."/>
            <person name="Iwama A."/>
            <person name="Ishikawa T."/>
            <person name="Jakt M."/>
            <person name="Kanapin A."/>
            <person name="Katoh M."/>
            <person name="Kawasawa Y."/>
            <person name="Kelso J."/>
            <person name="Kitamura H."/>
            <person name="Kitano H."/>
            <person name="Kollias G."/>
            <person name="Krishnan S.P."/>
            <person name="Kruger A."/>
            <person name="Kummerfeld S.K."/>
            <person name="Kurochkin I.V."/>
            <person name="Lareau L.F."/>
            <person name="Lazarevic D."/>
            <person name="Lipovich L."/>
            <person name="Liu J."/>
            <person name="Liuni S."/>
            <person name="McWilliam S."/>
            <person name="Madan Babu M."/>
            <person name="Madera M."/>
            <person name="Marchionni L."/>
            <person name="Matsuda H."/>
            <person name="Matsuzawa S."/>
            <person name="Miki H."/>
            <person name="Mignone F."/>
            <person name="Miyake S."/>
            <person name="Morris K."/>
            <person name="Mottagui-Tabar S."/>
            <person name="Mulder N."/>
            <person name="Nakano N."/>
            <person name="Nakauchi H."/>
            <person name="Ng P."/>
            <person name="Nilsson R."/>
            <person name="Nishiguchi S."/>
            <person name="Nishikawa S."/>
            <person name="Nori F."/>
            <person name="Ohara O."/>
            <person name="Okazaki Y."/>
            <person name="Orlando V."/>
            <person name="Pang K.C."/>
            <person name="Pavan W.J."/>
            <person name="Pavesi G."/>
            <person name="Pesole G."/>
            <person name="Petrovsky N."/>
            <person name="Piazza S."/>
            <person name="Reed J."/>
            <person name="Reid J.F."/>
            <person name="Ring B.Z."/>
            <person name="Ringwald M."/>
            <person name="Rost B."/>
            <person name="Ruan Y."/>
            <person name="Salzberg S.L."/>
            <person name="Sandelin A."/>
            <person name="Schneider C."/>
            <person name="Schoenbach C."/>
            <person name="Sekiguchi K."/>
            <person name="Semple C.A."/>
            <person name="Seno S."/>
            <person name="Sessa L."/>
            <person name="Sheng Y."/>
            <person name="Shibata Y."/>
            <person name="Shimada H."/>
            <person name="Shimada K."/>
            <person name="Silva D."/>
            <person name="Sinclair B."/>
            <person name="Sperling S."/>
            <person name="Stupka E."/>
            <person name="Sugiura K."/>
            <person name="Sultana R."/>
            <person name="Takenaka Y."/>
            <person name="Taki K."/>
            <person name="Tammoja K."/>
            <person name="Tan S.L."/>
            <person name="Tang S."/>
            <person name="Taylor M.S."/>
            <person name="Tegner J."/>
            <person name="Teichmann S.A."/>
            <person name="Ueda H.R."/>
            <person name="van Nimwegen E."/>
            <person name="Verardo R."/>
            <person name="Wei C.L."/>
            <person name="Yagi K."/>
            <person name="Yamanishi H."/>
            <person name="Zabarovsky E."/>
            <person name="Zhu S."/>
            <person name="Zimmer A."/>
            <person name="Hide W."/>
            <person name="Bult C."/>
            <person name="Grimmond S.M."/>
            <person name="Teasdale R.D."/>
            <person name="Liu E.T."/>
            <person name="Brusic V."/>
            <person name="Quackenbush J."/>
            <person name="Wahlestedt C."/>
            <person name="Mattick J.S."/>
            <person name="Hume D.A."/>
            <person name="Kai C."/>
            <person name="Sasaki D."/>
            <person name="Tomaru Y."/>
            <person name="Fukuda S."/>
            <person name="Kanamori-Katayama M."/>
            <person name="Suzuki M."/>
            <person name="Aoki J."/>
            <person name="Arakawa T."/>
            <person name="Iida J."/>
            <person name="Imamura K."/>
            <person name="Itoh M."/>
            <person name="Kato T."/>
            <person name="Kawaji H."/>
            <person name="Kawagashira N."/>
            <person name="Kawashima T."/>
            <person name="Kojima M."/>
            <person name="Kondo S."/>
            <person name="Konno H."/>
            <person name="Nakano K."/>
            <person name="Ninomiya N."/>
            <person name="Nishio T."/>
            <person name="Okada M."/>
            <person name="Plessy C."/>
            <person name="Shibata K."/>
            <person name="Shiraki T."/>
            <person name="Suzuki S."/>
            <person name="Tagami M."/>
            <person name="Waki K."/>
            <person name="Watahiki A."/>
            <person name="Okamura-Oho Y."/>
            <person name="Suzuki H."/>
            <person name="Kawai J."/>
            <person name="Hayashizaki Y."/>
        </authorList>
    </citation>
    <scope>NUCLEOTIDE SEQUENCE [LARGE SCALE MRNA] (ISOFORM 1)</scope>
    <source>
        <strain>C57BL/6J</strain>
        <tissue>Muellerian duct</tissue>
    </source>
</reference>
<reference key="2">
    <citation type="journal article" date="2004" name="Genome Res.">
        <title>The status, quality, and expansion of the NIH full-length cDNA project: the Mammalian Gene Collection (MGC).</title>
        <authorList>
            <consortium name="The MGC Project Team"/>
        </authorList>
    </citation>
    <scope>NUCLEOTIDE SEQUENCE [LARGE SCALE MRNA] (ISOFORMS 1 AND 2)</scope>
    <source>
        <strain>C57BL/6J</strain>
        <tissue>Eye</tissue>
    </source>
</reference>
<reference key="3">
    <citation type="journal article" date="2010" name="Cell">
        <title>A tissue-specific atlas of mouse protein phosphorylation and expression.</title>
        <authorList>
            <person name="Huttlin E.L."/>
            <person name="Jedrychowski M.P."/>
            <person name="Elias J.E."/>
            <person name="Goswami T."/>
            <person name="Rad R."/>
            <person name="Beausoleil S.A."/>
            <person name="Villen J."/>
            <person name="Haas W."/>
            <person name="Sowa M.E."/>
            <person name="Gygi S.P."/>
        </authorList>
    </citation>
    <scope>IDENTIFICATION BY MASS SPECTROMETRY [LARGE SCALE ANALYSIS]</scope>
    <source>
        <tissue>Brain</tissue>
        <tissue>Kidney</tissue>
        <tissue>Liver</tissue>
        <tissue>Lung</tissue>
        <tissue>Pancreas</tissue>
        <tissue>Spleen</tissue>
        <tissue>Testis</tissue>
    </source>
</reference>
<sequence length="581" mass="64403">MAPSTPLLTVRGSEGLYMVNGPPHFTESTVLPRESGRNCKVYTFSKDGTLFAWSNGEKVNIINVANKGLLHSFDLPKAVCLEFSPNNTVLATWQPYTTSKDGTAGTPNLQLYDMKTGACLKSFIQKKMQNWCPSWSDDEIICARNVNNEVHFFENNNFNTIANKLHLQKVNDFNLSPGTQPYKVAVYVPGSKGAPSFVRLYQYPNFAGPQAALANKSFFKADKVTMLWNKKATAVLVIASTEVDKTGASYYGEQTLHYIATNGESAVVQLPKNGPIYDVVWNSSSTEFCAVYGFMPAKATVFNLKCDPVFDFGTGPRNAAFYSPHGHILVLAGFGNLRGQMEVWDVKNYKLISKPVASDSTYFAWCPDGEHILTATCAPRLRVNNGYKIWHYTGSLLHKYDVPSNGELWQVSWQPFLDGIFPAKTIKYQAVPSEVPSEEPKVATAYRPPALRNKPVTNSKLHEEEPPQNMKPHPGSDKPLSKTALKNQRKHEAKKAAKQEARSDAAPTPVPQSAPRNTVTQSASGDPEVDKKIKNLKKKLKAIEQLKEQAAAGKQLEKNQLEKIQKETALLQELEDLELGV</sequence>
<dbReference type="EMBL" id="AK078519">
    <property type="protein sequence ID" value="BAC37320.1"/>
    <property type="status" value="ALT_INIT"/>
    <property type="molecule type" value="mRNA"/>
</dbReference>
<dbReference type="EMBL" id="BC030447">
    <property type="protein sequence ID" value="AAH30447.1"/>
    <property type="molecule type" value="mRNA"/>
</dbReference>
<dbReference type="EMBL" id="BC082557">
    <property type="protein sequence ID" value="AAH82557.1"/>
    <property type="molecule type" value="mRNA"/>
</dbReference>
<dbReference type="CCDS" id="CCDS17367.1">
    <molecule id="Q8BJW6-1"/>
</dbReference>
<dbReference type="RefSeq" id="NP_001005509.1">
    <molecule id="Q8BJW6-1"/>
    <property type="nucleotide sequence ID" value="NM_001005509.3"/>
</dbReference>
<dbReference type="SMR" id="Q8BJW6"/>
<dbReference type="BioGRID" id="230831">
    <property type="interactions" value="20"/>
</dbReference>
<dbReference type="FunCoup" id="Q8BJW6">
    <property type="interactions" value="3828"/>
</dbReference>
<dbReference type="IntAct" id="Q8BJW6">
    <property type="interactions" value="1"/>
</dbReference>
<dbReference type="STRING" id="10090.ENSMUSP00000029387"/>
<dbReference type="GlyGen" id="Q8BJW6">
    <property type="glycosylation" value="3 sites, 1 O-linked glycan (1 site)"/>
</dbReference>
<dbReference type="iPTMnet" id="Q8BJW6"/>
<dbReference type="PhosphoSitePlus" id="Q8BJW6"/>
<dbReference type="SwissPalm" id="Q8BJW6"/>
<dbReference type="jPOST" id="Q8BJW6"/>
<dbReference type="PaxDb" id="10090-ENSMUSP00000029387"/>
<dbReference type="PeptideAtlas" id="Q8BJW6"/>
<dbReference type="ProteomicsDB" id="275518">
    <molecule id="Q8BJW6-1"/>
</dbReference>
<dbReference type="ProteomicsDB" id="275519">
    <molecule id="Q8BJW6-2"/>
</dbReference>
<dbReference type="Pumba" id="Q8BJW6"/>
<dbReference type="Antibodypedia" id="33590">
    <property type="antibodies" value="354 antibodies from 36 providers"/>
</dbReference>
<dbReference type="Ensembl" id="ENSMUST00000029387.15">
    <molecule id="Q8BJW6-1"/>
    <property type="protein sequence ID" value="ENSMUSP00000029387.9"/>
    <property type="gene ID" value="ENSMUSG00000027810.15"/>
</dbReference>
<dbReference type="GeneID" id="229317"/>
<dbReference type="KEGG" id="mmu:229317"/>
<dbReference type="UCSC" id="uc008phu.2">
    <molecule id="Q8BJW6-1"/>
    <property type="organism name" value="mouse"/>
</dbReference>
<dbReference type="UCSC" id="uc008phv.2">
    <molecule id="Q8BJW6-2"/>
    <property type="organism name" value="mouse"/>
</dbReference>
<dbReference type="AGR" id="MGI:1098684"/>
<dbReference type="CTD" id="83939"/>
<dbReference type="MGI" id="MGI:1098684">
    <property type="gene designation" value="Eif2a"/>
</dbReference>
<dbReference type="VEuPathDB" id="HostDB:ENSMUSG00000027810"/>
<dbReference type="eggNOG" id="KOG2315">
    <property type="taxonomic scope" value="Eukaryota"/>
</dbReference>
<dbReference type="GeneTree" id="ENSGT00730000111053"/>
<dbReference type="HOGENOM" id="CLU_013809_1_0_1"/>
<dbReference type="InParanoid" id="Q8BJW6"/>
<dbReference type="OMA" id="RCCAYSP"/>
<dbReference type="OrthoDB" id="2194683at2759"/>
<dbReference type="PhylomeDB" id="Q8BJW6"/>
<dbReference type="TreeFam" id="TF105866"/>
<dbReference type="BioGRID-ORCS" id="229317">
    <property type="hits" value="2 hits in 78 CRISPR screens"/>
</dbReference>
<dbReference type="CD-CODE" id="764D0258">
    <property type="entry name" value="Neuronal RNP granule"/>
</dbReference>
<dbReference type="CD-CODE" id="CE726F99">
    <property type="entry name" value="Postsynaptic density"/>
</dbReference>
<dbReference type="ChiTaRS" id="Eif2a">
    <property type="organism name" value="mouse"/>
</dbReference>
<dbReference type="PRO" id="PR:Q8BJW6"/>
<dbReference type="Proteomes" id="UP000000589">
    <property type="component" value="Chromosome 3"/>
</dbReference>
<dbReference type="RNAct" id="Q8BJW6">
    <property type="molecule type" value="protein"/>
</dbReference>
<dbReference type="Bgee" id="ENSMUSG00000027810">
    <property type="expression patterns" value="Expressed in undifferentiated genital tubercle and 253 other cell types or tissues"/>
</dbReference>
<dbReference type="ExpressionAtlas" id="Q8BJW6">
    <property type="expression patterns" value="baseline and differential"/>
</dbReference>
<dbReference type="GO" id="GO:0005737">
    <property type="term" value="C:cytoplasm"/>
    <property type="evidence" value="ECO:0000250"/>
    <property type="project" value="UniProtKB"/>
</dbReference>
<dbReference type="GO" id="GO:0005850">
    <property type="term" value="C:eukaryotic translation initiation factor 2 complex"/>
    <property type="evidence" value="ECO:0000250"/>
    <property type="project" value="UniProtKB"/>
</dbReference>
<dbReference type="GO" id="GO:0043022">
    <property type="term" value="F:ribosome binding"/>
    <property type="evidence" value="ECO:0000250"/>
    <property type="project" value="UniProtKB"/>
</dbReference>
<dbReference type="GO" id="GO:0003743">
    <property type="term" value="F:translation initiation factor activity"/>
    <property type="evidence" value="ECO:0000250"/>
    <property type="project" value="UniProtKB"/>
</dbReference>
<dbReference type="GO" id="GO:0000049">
    <property type="term" value="F:tRNA binding"/>
    <property type="evidence" value="ECO:0000250"/>
    <property type="project" value="UniProtKB"/>
</dbReference>
<dbReference type="GO" id="GO:0030968">
    <property type="term" value="P:endoplasmic reticulum unfolded protein response"/>
    <property type="evidence" value="ECO:0000304"/>
    <property type="project" value="MGI"/>
</dbReference>
<dbReference type="GO" id="GO:0017148">
    <property type="term" value="P:negative regulation of translation"/>
    <property type="evidence" value="ECO:0000304"/>
    <property type="project" value="MGI"/>
</dbReference>
<dbReference type="GO" id="GO:1904294">
    <property type="term" value="P:positive regulation of ERAD pathway"/>
    <property type="evidence" value="ECO:0000304"/>
    <property type="project" value="MGI"/>
</dbReference>
<dbReference type="GO" id="GO:0009967">
    <property type="term" value="P:positive regulation of signal transduction"/>
    <property type="evidence" value="ECO:0000314"/>
    <property type="project" value="MGI"/>
</dbReference>
<dbReference type="GO" id="GO:0006417">
    <property type="term" value="P:regulation of translation"/>
    <property type="evidence" value="ECO:0000250"/>
    <property type="project" value="UniProtKB"/>
</dbReference>
<dbReference type="GO" id="GO:1990928">
    <property type="term" value="P:response to amino acid starvation"/>
    <property type="evidence" value="ECO:0007669"/>
    <property type="project" value="Ensembl"/>
</dbReference>
<dbReference type="GO" id="GO:0042255">
    <property type="term" value="P:ribosome assembly"/>
    <property type="evidence" value="ECO:0000250"/>
    <property type="project" value="UniProtKB"/>
</dbReference>
<dbReference type="GO" id="GO:0032933">
    <property type="term" value="P:SREBP signaling pathway"/>
    <property type="evidence" value="ECO:0000314"/>
    <property type="project" value="MGI"/>
</dbReference>
<dbReference type="GO" id="GO:0006412">
    <property type="term" value="P:translation"/>
    <property type="evidence" value="ECO:0000314"/>
    <property type="project" value="MGI"/>
</dbReference>
<dbReference type="FunFam" id="2.130.10.10:FF:000359">
    <property type="entry name" value="Eukaryotic translation initiation factor 2A"/>
    <property type="match status" value="1"/>
</dbReference>
<dbReference type="FunFam" id="2.130.10.10:FF:000407">
    <property type="entry name" value="Eukaryotic translation initiation factor 2A"/>
    <property type="match status" value="1"/>
</dbReference>
<dbReference type="Gene3D" id="2.130.10.10">
    <property type="entry name" value="YVTN repeat-like/Quinoprotein amine dehydrogenase"/>
    <property type="match status" value="2"/>
</dbReference>
<dbReference type="InterPro" id="IPR011387">
    <property type="entry name" value="TIF2A"/>
</dbReference>
<dbReference type="InterPro" id="IPR013979">
    <property type="entry name" value="TIF_beta_prop-like"/>
</dbReference>
<dbReference type="InterPro" id="IPR015943">
    <property type="entry name" value="WD40/YVTN_repeat-like_dom_sf"/>
</dbReference>
<dbReference type="InterPro" id="IPR036322">
    <property type="entry name" value="WD40_repeat_dom_sf"/>
</dbReference>
<dbReference type="PANTHER" id="PTHR13227">
    <property type="entry name" value="EUKARYOTIC TRANSLATION INITIATION FACTOR 2A"/>
    <property type="match status" value="1"/>
</dbReference>
<dbReference type="PANTHER" id="PTHR13227:SF0">
    <property type="entry name" value="EUKARYOTIC TRANSLATION INITIATION FACTOR 2A"/>
    <property type="match status" value="1"/>
</dbReference>
<dbReference type="Pfam" id="PF08662">
    <property type="entry name" value="eIF2A"/>
    <property type="match status" value="1"/>
</dbReference>
<dbReference type="PIRSF" id="PIRSF017222">
    <property type="entry name" value="eIF2A"/>
    <property type="match status" value="1"/>
</dbReference>
<dbReference type="SUPFAM" id="SSF50978">
    <property type="entry name" value="WD40 repeat-like"/>
    <property type="match status" value="1"/>
</dbReference>
<keyword id="KW-0007">Acetylation</keyword>
<keyword id="KW-0025">Alternative splicing</keyword>
<keyword id="KW-0175">Coiled coil</keyword>
<keyword id="KW-0396">Initiation factor</keyword>
<keyword id="KW-0597">Phosphoprotein</keyword>
<keyword id="KW-0648">Protein biosynthesis</keyword>
<keyword id="KW-1185">Reference proteome</keyword>
<keyword id="KW-0677">Repeat</keyword>
<keyword id="KW-0810">Translation regulation</keyword>
<keyword id="KW-0853">WD repeat</keyword>
<proteinExistence type="evidence at protein level"/>